<proteinExistence type="inferred from homology"/>
<reference key="1">
    <citation type="journal article" date="2012" name="Stand. Genomic Sci.">
        <title>Complete genome sequence of Polynucleobacter necessarius subsp. asymbioticus type strain (QLW-P1DMWA-1(T)).</title>
        <authorList>
            <person name="Meincke L."/>
            <person name="Copeland A."/>
            <person name="Lapidus A."/>
            <person name="Lucas S."/>
            <person name="Berry K.W."/>
            <person name="Del Rio T.G."/>
            <person name="Hammon N."/>
            <person name="Dalin E."/>
            <person name="Tice H."/>
            <person name="Pitluck S."/>
            <person name="Richardson P."/>
            <person name="Bruce D."/>
            <person name="Goodwin L."/>
            <person name="Han C."/>
            <person name="Tapia R."/>
            <person name="Detter J.C."/>
            <person name="Schmutz J."/>
            <person name="Brettin T."/>
            <person name="Larimer F."/>
            <person name="Land M."/>
            <person name="Hauser L."/>
            <person name="Kyrpides N.C."/>
            <person name="Ivanova N."/>
            <person name="Goker M."/>
            <person name="Woyke T."/>
            <person name="Wu Q.L."/>
            <person name="Pockl M."/>
            <person name="Hahn M.W."/>
            <person name="Klenk H.P."/>
        </authorList>
    </citation>
    <scope>NUCLEOTIDE SEQUENCE [LARGE SCALE GENOMIC DNA]</scope>
    <source>
        <strain>DSM 18221 / CIP 109841 / QLW-P1DMWA-1</strain>
    </source>
</reference>
<evidence type="ECO:0000255" key="1">
    <source>
        <dbReference type="HAMAP-Rule" id="MF_00563"/>
    </source>
</evidence>
<gene>
    <name evidence="1" type="primary">ahcY</name>
    <name type="ordered locus">Pnuc_2002</name>
</gene>
<sequence length="481" mass="52772">MNTVSDLNNFVATRCAIADISLSDFGRKEIAIAETEMPGLIAIRDEFAAQQPLRGARITGSLHMTIQTAVLIETLEALGAEVQWASCNIFSTQDHAAAAIAANGTPVFAIKGETLEQYWDFTHRIFEWADGGYTNMILDDGGDATLLLHLGARAEKDQACLNNPTSEEETILFAAIKKKLAQDPTWYSTRLEKVKGVTEETTTGVHRLYQMFAKGELKFPAINVNDSVTKSKFDNLYGCRESLVDAIKRATDVMVAGKVAVVCGYGDVGKGSAQALRALSAQVWVTEVDPICALQAAMEGYRVVTMDYAADKADIFVSATGNYHVITHDHMAKMKNQAIVCNIGHFDNEIDVAGIEKYKWEEIKPQVDHVIFPAANGKPEKRIIILAKGRLVNLGCGTGHPSYVMSSSFANQVIAQIELWNAVGTDKYPIGVYTLPKHLDEKVARLQLKTLNAELTVLSDQQASYIGVTKEGPYKADHYRY</sequence>
<organism>
    <name type="scientific">Polynucleobacter asymbioticus (strain DSM 18221 / CIP 109841 / QLW-P1DMWA-1)</name>
    <name type="common">Polynucleobacter necessarius subsp. asymbioticus</name>
    <dbReference type="NCBI Taxonomy" id="312153"/>
    <lineage>
        <taxon>Bacteria</taxon>
        <taxon>Pseudomonadati</taxon>
        <taxon>Pseudomonadota</taxon>
        <taxon>Betaproteobacteria</taxon>
        <taxon>Burkholderiales</taxon>
        <taxon>Burkholderiaceae</taxon>
        <taxon>Polynucleobacter</taxon>
    </lineage>
</organism>
<feature type="chain" id="PRO_1000129293" description="Adenosylhomocysteinase">
    <location>
        <begin position="1"/>
        <end position="481"/>
    </location>
</feature>
<feature type="binding site" evidence="1">
    <location>
        <position position="65"/>
    </location>
    <ligand>
        <name>substrate</name>
    </ligand>
</feature>
<feature type="binding site" evidence="1">
    <location>
        <position position="140"/>
    </location>
    <ligand>
        <name>substrate</name>
    </ligand>
</feature>
<feature type="binding site" evidence="1">
    <location>
        <position position="200"/>
    </location>
    <ligand>
        <name>substrate</name>
    </ligand>
</feature>
<feature type="binding site" evidence="1">
    <location>
        <begin position="201"/>
        <end position="203"/>
    </location>
    <ligand>
        <name>NAD(+)</name>
        <dbReference type="ChEBI" id="CHEBI:57540"/>
    </ligand>
</feature>
<feature type="binding site" evidence="1">
    <location>
        <position position="230"/>
    </location>
    <ligand>
        <name>substrate</name>
    </ligand>
</feature>
<feature type="binding site" evidence="1">
    <location>
        <position position="234"/>
    </location>
    <ligand>
        <name>substrate</name>
    </ligand>
</feature>
<feature type="binding site" evidence="1">
    <location>
        <position position="235"/>
    </location>
    <ligand>
        <name>NAD(+)</name>
        <dbReference type="ChEBI" id="CHEBI:57540"/>
    </ligand>
</feature>
<feature type="binding site" evidence="1">
    <location>
        <begin position="264"/>
        <end position="269"/>
    </location>
    <ligand>
        <name>NAD(+)</name>
        <dbReference type="ChEBI" id="CHEBI:57540"/>
    </ligand>
</feature>
<feature type="binding site" evidence="1">
    <location>
        <position position="287"/>
    </location>
    <ligand>
        <name>NAD(+)</name>
        <dbReference type="ChEBI" id="CHEBI:57540"/>
    </ligand>
</feature>
<feature type="binding site" evidence="1">
    <location>
        <position position="322"/>
    </location>
    <ligand>
        <name>NAD(+)</name>
        <dbReference type="ChEBI" id="CHEBI:57540"/>
    </ligand>
</feature>
<feature type="binding site" evidence="1">
    <location>
        <begin position="343"/>
        <end position="345"/>
    </location>
    <ligand>
        <name>NAD(+)</name>
        <dbReference type="ChEBI" id="CHEBI:57540"/>
    </ligand>
</feature>
<feature type="binding site" evidence="1">
    <location>
        <position position="393"/>
    </location>
    <ligand>
        <name>NAD(+)</name>
        <dbReference type="ChEBI" id="CHEBI:57540"/>
    </ligand>
</feature>
<keyword id="KW-0963">Cytoplasm</keyword>
<keyword id="KW-0378">Hydrolase</keyword>
<keyword id="KW-0520">NAD</keyword>
<keyword id="KW-0554">One-carbon metabolism</keyword>
<keyword id="KW-1185">Reference proteome</keyword>
<accession>A4T0E9</accession>
<protein>
    <recommendedName>
        <fullName evidence="1">Adenosylhomocysteinase</fullName>
        <ecNumber evidence="1">3.13.2.1</ecNumber>
    </recommendedName>
    <alternativeName>
        <fullName evidence="1">S-adenosyl-L-homocysteine hydrolase</fullName>
        <shortName evidence="1">AdoHcyase</shortName>
    </alternativeName>
</protein>
<name>SAHH_POLAQ</name>
<comment type="function">
    <text evidence="1">May play a key role in the regulation of the intracellular concentration of adenosylhomocysteine.</text>
</comment>
<comment type="catalytic activity">
    <reaction evidence="1">
        <text>S-adenosyl-L-homocysteine + H2O = L-homocysteine + adenosine</text>
        <dbReference type="Rhea" id="RHEA:21708"/>
        <dbReference type="ChEBI" id="CHEBI:15377"/>
        <dbReference type="ChEBI" id="CHEBI:16335"/>
        <dbReference type="ChEBI" id="CHEBI:57856"/>
        <dbReference type="ChEBI" id="CHEBI:58199"/>
        <dbReference type="EC" id="3.13.2.1"/>
    </reaction>
</comment>
<comment type="cofactor">
    <cofactor evidence="1">
        <name>NAD(+)</name>
        <dbReference type="ChEBI" id="CHEBI:57540"/>
    </cofactor>
    <text evidence="1">Binds 1 NAD(+) per subunit.</text>
</comment>
<comment type="pathway">
    <text evidence="1">Amino-acid biosynthesis; L-homocysteine biosynthesis; L-homocysteine from S-adenosyl-L-homocysteine: step 1/1.</text>
</comment>
<comment type="subcellular location">
    <subcellularLocation>
        <location evidence="1">Cytoplasm</location>
    </subcellularLocation>
</comment>
<comment type="similarity">
    <text evidence="1">Belongs to the adenosylhomocysteinase family.</text>
</comment>
<dbReference type="EC" id="3.13.2.1" evidence="1"/>
<dbReference type="EMBL" id="CP000655">
    <property type="protein sequence ID" value="ABP35213.1"/>
    <property type="molecule type" value="Genomic_DNA"/>
</dbReference>
<dbReference type="RefSeq" id="WP_011903836.1">
    <property type="nucleotide sequence ID" value="NC_009379.1"/>
</dbReference>
<dbReference type="SMR" id="A4T0E9"/>
<dbReference type="GeneID" id="31482392"/>
<dbReference type="KEGG" id="pnu:Pnuc_2002"/>
<dbReference type="eggNOG" id="COG0499">
    <property type="taxonomic scope" value="Bacteria"/>
</dbReference>
<dbReference type="HOGENOM" id="CLU_025194_2_1_4"/>
<dbReference type="UniPathway" id="UPA00314">
    <property type="reaction ID" value="UER00076"/>
</dbReference>
<dbReference type="Proteomes" id="UP000000231">
    <property type="component" value="Chromosome"/>
</dbReference>
<dbReference type="GO" id="GO:0005829">
    <property type="term" value="C:cytosol"/>
    <property type="evidence" value="ECO:0007669"/>
    <property type="project" value="TreeGrafter"/>
</dbReference>
<dbReference type="GO" id="GO:0004013">
    <property type="term" value="F:adenosylhomocysteinase activity"/>
    <property type="evidence" value="ECO:0007669"/>
    <property type="project" value="UniProtKB-UniRule"/>
</dbReference>
<dbReference type="GO" id="GO:0071269">
    <property type="term" value="P:L-homocysteine biosynthetic process"/>
    <property type="evidence" value="ECO:0007669"/>
    <property type="project" value="UniProtKB-UniRule"/>
</dbReference>
<dbReference type="GO" id="GO:0006730">
    <property type="term" value="P:one-carbon metabolic process"/>
    <property type="evidence" value="ECO:0007669"/>
    <property type="project" value="UniProtKB-KW"/>
</dbReference>
<dbReference type="GO" id="GO:0033353">
    <property type="term" value="P:S-adenosylmethionine cycle"/>
    <property type="evidence" value="ECO:0007669"/>
    <property type="project" value="TreeGrafter"/>
</dbReference>
<dbReference type="CDD" id="cd00401">
    <property type="entry name" value="SAHH"/>
    <property type="match status" value="1"/>
</dbReference>
<dbReference type="FunFam" id="3.40.50.720:FF:000004">
    <property type="entry name" value="Adenosylhomocysteinase"/>
    <property type="match status" value="1"/>
</dbReference>
<dbReference type="Gene3D" id="3.40.50.1480">
    <property type="entry name" value="Adenosylhomocysteinase-like"/>
    <property type="match status" value="1"/>
</dbReference>
<dbReference type="Gene3D" id="3.40.50.720">
    <property type="entry name" value="NAD(P)-binding Rossmann-like Domain"/>
    <property type="match status" value="1"/>
</dbReference>
<dbReference type="HAMAP" id="MF_00563">
    <property type="entry name" value="AdoHcyase"/>
    <property type="match status" value="1"/>
</dbReference>
<dbReference type="InterPro" id="IPR042172">
    <property type="entry name" value="Adenosylhomocyst_ase-like_sf"/>
</dbReference>
<dbReference type="InterPro" id="IPR000043">
    <property type="entry name" value="Adenosylhomocysteinase-like"/>
</dbReference>
<dbReference type="InterPro" id="IPR015878">
    <property type="entry name" value="Ado_hCys_hydrolase_NAD-bd"/>
</dbReference>
<dbReference type="InterPro" id="IPR036291">
    <property type="entry name" value="NAD(P)-bd_dom_sf"/>
</dbReference>
<dbReference type="InterPro" id="IPR020082">
    <property type="entry name" value="S-Ado-L-homoCys_hydrolase_CS"/>
</dbReference>
<dbReference type="NCBIfam" id="TIGR00936">
    <property type="entry name" value="ahcY"/>
    <property type="match status" value="1"/>
</dbReference>
<dbReference type="NCBIfam" id="NF004005">
    <property type="entry name" value="PRK05476.2-3"/>
    <property type="match status" value="1"/>
</dbReference>
<dbReference type="PANTHER" id="PTHR23420">
    <property type="entry name" value="ADENOSYLHOMOCYSTEINASE"/>
    <property type="match status" value="1"/>
</dbReference>
<dbReference type="PANTHER" id="PTHR23420:SF0">
    <property type="entry name" value="ADENOSYLHOMOCYSTEINASE"/>
    <property type="match status" value="1"/>
</dbReference>
<dbReference type="Pfam" id="PF05221">
    <property type="entry name" value="AdoHcyase"/>
    <property type="match status" value="1"/>
</dbReference>
<dbReference type="Pfam" id="PF00670">
    <property type="entry name" value="AdoHcyase_NAD"/>
    <property type="match status" value="1"/>
</dbReference>
<dbReference type="PIRSF" id="PIRSF001109">
    <property type="entry name" value="Ad_hcy_hydrolase"/>
    <property type="match status" value="1"/>
</dbReference>
<dbReference type="SMART" id="SM00996">
    <property type="entry name" value="AdoHcyase"/>
    <property type="match status" value="1"/>
</dbReference>
<dbReference type="SMART" id="SM00997">
    <property type="entry name" value="AdoHcyase_NAD"/>
    <property type="match status" value="1"/>
</dbReference>
<dbReference type="SUPFAM" id="SSF52283">
    <property type="entry name" value="Formate/glycerate dehydrogenase catalytic domain-like"/>
    <property type="match status" value="1"/>
</dbReference>
<dbReference type="SUPFAM" id="SSF51735">
    <property type="entry name" value="NAD(P)-binding Rossmann-fold domains"/>
    <property type="match status" value="1"/>
</dbReference>
<dbReference type="PROSITE" id="PS00738">
    <property type="entry name" value="ADOHCYASE_1"/>
    <property type="match status" value="1"/>
</dbReference>
<dbReference type="PROSITE" id="PS00739">
    <property type="entry name" value="ADOHCYASE_2"/>
    <property type="match status" value="1"/>
</dbReference>